<proteinExistence type="inferred from homology"/>
<comment type="function">
    <text evidence="1">Represses a number of genes involved in the response to DNA damage (SOS response), including recA and lexA. In the presence of single-stranded DNA, RecA interacts with LexA causing an autocatalytic cleavage which disrupts the DNA-binding part of LexA, leading to derepression of the SOS regulon and eventually DNA repair.</text>
</comment>
<comment type="catalytic activity">
    <reaction evidence="1">
        <text>Hydrolysis of Ala-|-Gly bond in repressor LexA.</text>
        <dbReference type="EC" id="3.4.21.88"/>
    </reaction>
</comment>
<comment type="subunit">
    <text evidence="1">Homodimer.</text>
</comment>
<comment type="similarity">
    <text evidence="1">Belongs to the peptidase S24 family.</text>
</comment>
<comment type="sequence caution" evidence="2">
    <conflict type="erroneous initiation">
        <sequence resource="EMBL-CDS" id="ABC37161"/>
    </conflict>
</comment>
<name>LEXA_BURTA</name>
<keyword id="KW-0068">Autocatalytic cleavage</keyword>
<keyword id="KW-0227">DNA damage</keyword>
<keyword id="KW-0234">DNA repair</keyword>
<keyword id="KW-0235">DNA replication</keyword>
<keyword id="KW-0238">DNA-binding</keyword>
<keyword id="KW-0378">Hydrolase</keyword>
<keyword id="KW-0678">Repressor</keyword>
<keyword id="KW-0742">SOS response</keyword>
<keyword id="KW-0804">Transcription</keyword>
<keyword id="KW-0805">Transcription regulation</keyword>
<gene>
    <name evidence="1" type="primary">lexA</name>
    <name type="ordered locus">BTH_I2481</name>
</gene>
<sequence length="215" mass="23169">MIKLTARQQQVFDLIRRAIERSGFPPTRAEIAAELGFSSPNAAEEHLRALARKGVIELAAGASRGIRLLGLDDAPHQLTLPHAALMQLSLPLVGRVAAGSPILAQEHISQHYACDPALFSSKPDYLLKVRGLSMRDAGILDGDLLAVQKRAEAKDGQIIVARLGDDVTVKRLKRRPGGVELIAENPDYENIFVKAGSAEFALEGIAVGLIRPGEF</sequence>
<reference key="1">
    <citation type="journal article" date="2005" name="BMC Genomics">
        <title>Bacterial genome adaptation to niches: divergence of the potential virulence genes in three Burkholderia species of different survival strategies.</title>
        <authorList>
            <person name="Kim H.S."/>
            <person name="Schell M.A."/>
            <person name="Yu Y."/>
            <person name="Ulrich R.L."/>
            <person name="Sarria S.H."/>
            <person name="Nierman W.C."/>
            <person name="DeShazer D."/>
        </authorList>
    </citation>
    <scope>NUCLEOTIDE SEQUENCE [LARGE SCALE GENOMIC DNA]</scope>
    <source>
        <strain>ATCC 700388 / DSM 13276 / CCUG 48851 / CIP 106301 / E264</strain>
    </source>
</reference>
<evidence type="ECO:0000255" key="1">
    <source>
        <dbReference type="HAMAP-Rule" id="MF_00015"/>
    </source>
</evidence>
<evidence type="ECO:0000305" key="2"/>
<dbReference type="EC" id="3.4.21.88" evidence="1"/>
<dbReference type="EMBL" id="CP000086">
    <property type="protein sequence ID" value="ABC37161.1"/>
    <property type="status" value="ALT_INIT"/>
    <property type="molecule type" value="Genomic_DNA"/>
</dbReference>
<dbReference type="RefSeq" id="WP_009891323.1">
    <property type="nucleotide sequence ID" value="NZ_CP008785.1"/>
</dbReference>
<dbReference type="SMR" id="Q2SVP7"/>
<dbReference type="MEROPS" id="S24.001"/>
<dbReference type="GeneID" id="45122193"/>
<dbReference type="KEGG" id="bte:BTH_I2481"/>
<dbReference type="HOGENOM" id="CLU_066192_45_3_4"/>
<dbReference type="Proteomes" id="UP000001930">
    <property type="component" value="Chromosome I"/>
</dbReference>
<dbReference type="CollecTF" id="EXPREG_00000db0"/>
<dbReference type="GO" id="GO:0003677">
    <property type="term" value="F:DNA binding"/>
    <property type="evidence" value="ECO:0007669"/>
    <property type="project" value="UniProtKB-UniRule"/>
</dbReference>
<dbReference type="GO" id="GO:0004252">
    <property type="term" value="F:serine-type endopeptidase activity"/>
    <property type="evidence" value="ECO:0007669"/>
    <property type="project" value="UniProtKB-UniRule"/>
</dbReference>
<dbReference type="GO" id="GO:0006281">
    <property type="term" value="P:DNA repair"/>
    <property type="evidence" value="ECO:0007669"/>
    <property type="project" value="UniProtKB-UniRule"/>
</dbReference>
<dbReference type="GO" id="GO:0006260">
    <property type="term" value="P:DNA replication"/>
    <property type="evidence" value="ECO:0007669"/>
    <property type="project" value="UniProtKB-UniRule"/>
</dbReference>
<dbReference type="GO" id="GO:0045892">
    <property type="term" value="P:negative regulation of DNA-templated transcription"/>
    <property type="evidence" value="ECO:0007669"/>
    <property type="project" value="UniProtKB-UniRule"/>
</dbReference>
<dbReference type="GO" id="GO:0006508">
    <property type="term" value="P:proteolysis"/>
    <property type="evidence" value="ECO:0007669"/>
    <property type="project" value="InterPro"/>
</dbReference>
<dbReference type="GO" id="GO:0009432">
    <property type="term" value="P:SOS response"/>
    <property type="evidence" value="ECO:0007669"/>
    <property type="project" value="UniProtKB-UniRule"/>
</dbReference>
<dbReference type="CDD" id="cd06529">
    <property type="entry name" value="S24_LexA-like"/>
    <property type="match status" value="1"/>
</dbReference>
<dbReference type="FunFam" id="1.10.10.10:FF:000009">
    <property type="entry name" value="LexA repressor"/>
    <property type="match status" value="1"/>
</dbReference>
<dbReference type="FunFam" id="2.10.109.10:FF:000001">
    <property type="entry name" value="LexA repressor"/>
    <property type="match status" value="1"/>
</dbReference>
<dbReference type="Gene3D" id="2.10.109.10">
    <property type="entry name" value="Umud Fragment, subunit A"/>
    <property type="match status" value="1"/>
</dbReference>
<dbReference type="Gene3D" id="1.10.10.10">
    <property type="entry name" value="Winged helix-like DNA-binding domain superfamily/Winged helix DNA-binding domain"/>
    <property type="match status" value="1"/>
</dbReference>
<dbReference type="HAMAP" id="MF_00015">
    <property type="entry name" value="LexA"/>
    <property type="match status" value="1"/>
</dbReference>
<dbReference type="InterPro" id="IPR006200">
    <property type="entry name" value="LexA"/>
</dbReference>
<dbReference type="InterPro" id="IPR039418">
    <property type="entry name" value="LexA-like"/>
</dbReference>
<dbReference type="InterPro" id="IPR036286">
    <property type="entry name" value="LexA/Signal_pep-like_sf"/>
</dbReference>
<dbReference type="InterPro" id="IPR006199">
    <property type="entry name" value="LexA_DNA-bd_dom"/>
</dbReference>
<dbReference type="InterPro" id="IPR050077">
    <property type="entry name" value="LexA_repressor"/>
</dbReference>
<dbReference type="InterPro" id="IPR006197">
    <property type="entry name" value="Peptidase_S24_LexA"/>
</dbReference>
<dbReference type="InterPro" id="IPR015927">
    <property type="entry name" value="Peptidase_S24_S26A/B/C"/>
</dbReference>
<dbReference type="InterPro" id="IPR036388">
    <property type="entry name" value="WH-like_DNA-bd_sf"/>
</dbReference>
<dbReference type="InterPro" id="IPR036390">
    <property type="entry name" value="WH_DNA-bd_sf"/>
</dbReference>
<dbReference type="NCBIfam" id="TIGR00498">
    <property type="entry name" value="lexA"/>
    <property type="match status" value="1"/>
</dbReference>
<dbReference type="PANTHER" id="PTHR33516">
    <property type="entry name" value="LEXA REPRESSOR"/>
    <property type="match status" value="1"/>
</dbReference>
<dbReference type="PANTHER" id="PTHR33516:SF2">
    <property type="entry name" value="LEXA REPRESSOR-RELATED"/>
    <property type="match status" value="1"/>
</dbReference>
<dbReference type="Pfam" id="PF01726">
    <property type="entry name" value="LexA_DNA_bind"/>
    <property type="match status" value="1"/>
</dbReference>
<dbReference type="Pfam" id="PF00717">
    <property type="entry name" value="Peptidase_S24"/>
    <property type="match status" value="1"/>
</dbReference>
<dbReference type="PRINTS" id="PR00726">
    <property type="entry name" value="LEXASERPTASE"/>
</dbReference>
<dbReference type="SUPFAM" id="SSF51306">
    <property type="entry name" value="LexA/Signal peptidase"/>
    <property type="match status" value="1"/>
</dbReference>
<dbReference type="SUPFAM" id="SSF46785">
    <property type="entry name" value="Winged helix' DNA-binding domain"/>
    <property type="match status" value="1"/>
</dbReference>
<accession>Q2SVP7</accession>
<organism>
    <name type="scientific">Burkholderia thailandensis (strain ATCC 700388 / DSM 13276 / CCUG 48851 / CIP 106301 / E264)</name>
    <dbReference type="NCBI Taxonomy" id="271848"/>
    <lineage>
        <taxon>Bacteria</taxon>
        <taxon>Pseudomonadati</taxon>
        <taxon>Pseudomonadota</taxon>
        <taxon>Betaproteobacteria</taxon>
        <taxon>Burkholderiales</taxon>
        <taxon>Burkholderiaceae</taxon>
        <taxon>Burkholderia</taxon>
        <taxon>pseudomallei group</taxon>
    </lineage>
</organism>
<feature type="chain" id="PRO_0000322717" description="LexA repressor">
    <location>
        <begin position="1"/>
        <end position="215"/>
    </location>
</feature>
<feature type="DNA-binding region" description="H-T-H motif" evidence="1">
    <location>
        <begin position="28"/>
        <end position="48"/>
    </location>
</feature>
<feature type="active site" description="For autocatalytic cleavage activity" evidence="1">
    <location>
        <position position="133"/>
    </location>
</feature>
<feature type="active site" description="For autocatalytic cleavage activity" evidence="1">
    <location>
        <position position="170"/>
    </location>
</feature>
<feature type="site" description="Cleavage; by autolysis" evidence="1">
    <location>
        <begin position="98"/>
        <end position="99"/>
    </location>
</feature>
<protein>
    <recommendedName>
        <fullName evidence="1">LexA repressor</fullName>
        <ecNumber evidence="1">3.4.21.88</ecNumber>
    </recommendedName>
</protein>